<gene>
    <name type="ordered locus">SAUSA300_1796</name>
</gene>
<proteinExistence type="inferred from homology"/>
<sequence length="374" mass="42696">MNALFIIIFMIVVGAIIGGITNVIAIRMLFHPFKPYYIFKFRVPFTPGLIPKRREEIATKIGQVIEEHLLTETLINEKLKSEQSQQAIESMIQQQLQKLTKDQLSIKQITSQIDIDLEQVLQTNGNQYIESQLNNYYTKHQNQTIASLLPNQLVTFLNQHVDNATDLLCDRARNYLSSAKGTQDINDMLDTFFNEKGKLIGMLQMFMTKESIADRIQQELIRLTSHPKARTIVTSLITNEYQTFKDKPLNELLDASQFNEIAENLSVYVTTYASKQANKPVVTLMPQFVDYLEGQLSSKLANLIIEKLSIHLSTIMKKVDLRGLIEEQINTFDLDYIEKLIIEIANKELKLIMSLGFILGGIIGFFQGLVAIFV</sequence>
<feature type="chain" id="PRO_0000388317" description="UPF0754 membrane protein SAUSA300_1796">
    <location>
        <begin position="1"/>
        <end position="374"/>
    </location>
</feature>
<feature type="transmembrane region" description="Helical" evidence="2">
    <location>
        <begin position="4"/>
        <end position="24"/>
    </location>
</feature>
<feature type="transmembrane region" description="Helical" evidence="2">
    <location>
        <begin position="354"/>
        <end position="374"/>
    </location>
</feature>
<dbReference type="EMBL" id="CP000255">
    <property type="protein sequence ID" value="ABD20707.1"/>
    <property type="molecule type" value="Genomic_DNA"/>
</dbReference>
<dbReference type="RefSeq" id="WP_000992527.1">
    <property type="nucleotide sequence ID" value="NZ_CP027476.1"/>
</dbReference>
<dbReference type="SMR" id="Q2FFP9"/>
<dbReference type="KEGG" id="saa:SAUSA300_1796"/>
<dbReference type="HOGENOM" id="CLU_042384_0_0_9"/>
<dbReference type="OMA" id="FKMITYL"/>
<dbReference type="Proteomes" id="UP000001939">
    <property type="component" value="Chromosome"/>
</dbReference>
<dbReference type="GO" id="GO:0005886">
    <property type="term" value="C:plasma membrane"/>
    <property type="evidence" value="ECO:0007669"/>
    <property type="project" value="UniProtKB-SubCell"/>
</dbReference>
<dbReference type="InterPro" id="IPR007383">
    <property type="entry name" value="DUF445"/>
</dbReference>
<dbReference type="InterPro" id="IPR016991">
    <property type="entry name" value="UCP032178"/>
</dbReference>
<dbReference type="PANTHER" id="PTHR35791">
    <property type="entry name" value="UPF0754 MEMBRANE PROTEIN YHEB"/>
    <property type="match status" value="1"/>
</dbReference>
<dbReference type="PANTHER" id="PTHR35791:SF1">
    <property type="entry name" value="UPF0754 MEMBRANE PROTEIN YHEB"/>
    <property type="match status" value="1"/>
</dbReference>
<dbReference type="Pfam" id="PF04286">
    <property type="entry name" value="DUF445"/>
    <property type="match status" value="1"/>
</dbReference>
<dbReference type="PIRSF" id="PIRSF032178">
    <property type="entry name" value="UCP032178"/>
    <property type="match status" value="1"/>
</dbReference>
<keyword id="KW-1003">Cell membrane</keyword>
<keyword id="KW-0472">Membrane</keyword>
<keyword id="KW-0812">Transmembrane</keyword>
<keyword id="KW-1133">Transmembrane helix</keyword>
<accession>Q2FFP9</accession>
<comment type="subcellular location">
    <subcellularLocation>
        <location evidence="1">Cell membrane</location>
        <topology evidence="1">Multi-pass membrane protein</topology>
    </subcellularLocation>
</comment>
<comment type="similarity">
    <text evidence="3">Belongs to the UPF0754 family.</text>
</comment>
<organism>
    <name type="scientific">Staphylococcus aureus (strain USA300)</name>
    <dbReference type="NCBI Taxonomy" id="367830"/>
    <lineage>
        <taxon>Bacteria</taxon>
        <taxon>Bacillati</taxon>
        <taxon>Bacillota</taxon>
        <taxon>Bacilli</taxon>
        <taxon>Bacillales</taxon>
        <taxon>Staphylococcaceae</taxon>
        <taxon>Staphylococcus</taxon>
    </lineage>
</organism>
<reference key="1">
    <citation type="journal article" date="2006" name="Lancet">
        <title>Complete genome sequence of USA300, an epidemic clone of community-acquired meticillin-resistant Staphylococcus aureus.</title>
        <authorList>
            <person name="Diep B.A."/>
            <person name="Gill S.R."/>
            <person name="Chang R.F."/>
            <person name="Phan T.H."/>
            <person name="Chen J.H."/>
            <person name="Davidson M.G."/>
            <person name="Lin F."/>
            <person name="Lin J."/>
            <person name="Carleton H.A."/>
            <person name="Mongodin E.F."/>
            <person name="Sensabaugh G.F."/>
            <person name="Perdreau-Remington F."/>
        </authorList>
    </citation>
    <scope>NUCLEOTIDE SEQUENCE [LARGE SCALE GENOMIC DNA]</scope>
    <source>
        <strain>USA300</strain>
    </source>
</reference>
<protein>
    <recommendedName>
        <fullName>UPF0754 membrane protein SAUSA300_1796</fullName>
    </recommendedName>
</protein>
<name>Y1796_STAA3</name>
<evidence type="ECO:0000250" key="1"/>
<evidence type="ECO:0000255" key="2"/>
<evidence type="ECO:0000305" key="3"/>